<dbReference type="EC" id="2.1.1.173" evidence="1"/>
<dbReference type="EC" id="2.1.1.264" evidence="1"/>
<dbReference type="EMBL" id="CR628336">
    <property type="protein sequence ID" value="CAH11170.1"/>
    <property type="molecule type" value="Genomic_DNA"/>
</dbReference>
<dbReference type="SMR" id="Q5X969"/>
<dbReference type="KEGG" id="lpp:lpp0022"/>
<dbReference type="LegioList" id="lpp0022"/>
<dbReference type="HOGENOM" id="CLU_014042_2_0_6"/>
<dbReference type="GO" id="GO:0005737">
    <property type="term" value="C:cytoplasm"/>
    <property type="evidence" value="ECO:0007669"/>
    <property type="project" value="UniProtKB-SubCell"/>
</dbReference>
<dbReference type="GO" id="GO:0052915">
    <property type="term" value="F:23S rRNA (guanine(2445)-N(2))-methyltransferase activity"/>
    <property type="evidence" value="ECO:0007669"/>
    <property type="project" value="UniProtKB-UniRule"/>
</dbReference>
<dbReference type="GO" id="GO:0003723">
    <property type="term" value="F:RNA binding"/>
    <property type="evidence" value="ECO:0007669"/>
    <property type="project" value="UniProtKB-KW"/>
</dbReference>
<dbReference type="GO" id="GO:0070043">
    <property type="term" value="F:rRNA (guanine-N7-)-methyltransferase activity"/>
    <property type="evidence" value="ECO:0007669"/>
    <property type="project" value="UniProtKB-UniRule"/>
</dbReference>
<dbReference type="CDD" id="cd02440">
    <property type="entry name" value="AdoMet_MTases"/>
    <property type="match status" value="1"/>
</dbReference>
<dbReference type="CDD" id="cd11715">
    <property type="entry name" value="THUMP_AdoMetMT"/>
    <property type="match status" value="1"/>
</dbReference>
<dbReference type="Gene3D" id="3.30.2130.30">
    <property type="match status" value="1"/>
</dbReference>
<dbReference type="Gene3D" id="3.30.750.80">
    <property type="entry name" value="RNA methyltransferase domain (HRMD) like"/>
    <property type="match status" value="1"/>
</dbReference>
<dbReference type="Gene3D" id="3.40.50.150">
    <property type="entry name" value="Vaccinia Virus protein VP39"/>
    <property type="match status" value="2"/>
</dbReference>
<dbReference type="HAMAP" id="MF_01858">
    <property type="entry name" value="23SrRNA_methyltr_KL"/>
    <property type="match status" value="1"/>
</dbReference>
<dbReference type="InterPro" id="IPR017244">
    <property type="entry name" value="23SrRNA_methyltr_KL"/>
</dbReference>
<dbReference type="InterPro" id="IPR002052">
    <property type="entry name" value="DNA_methylase_N6_adenine_CS"/>
</dbReference>
<dbReference type="InterPro" id="IPR000241">
    <property type="entry name" value="RlmKL-like_Mtase"/>
</dbReference>
<dbReference type="InterPro" id="IPR053943">
    <property type="entry name" value="RlmKL-like_Mtase_CS"/>
</dbReference>
<dbReference type="InterPro" id="IPR054170">
    <property type="entry name" value="RlmL_1st"/>
</dbReference>
<dbReference type="InterPro" id="IPR019614">
    <property type="entry name" value="SAM-dep_methyl-trfase"/>
</dbReference>
<dbReference type="InterPro" id="IPR029063">
    <property type="entry name" value="SAM-dependent_MTases_sf"/>
</dbReference>
<dbReference type="InterPro" id="IPR004114">
    <property type="entry name" value="THUMP_dom"/>
</dbReference>
<dbReference type="NCBIfam" id="NF008748">
    <property type="entry name" value="PRK11783.1"/>
    <property type="match status" value="1"/>
</dbReference>
<dbReference type="PANTHER" id="PTHR47313">
    <property type="entry name" value="RIBOSOMAL RNA LARGE SUBUNIT METHYLTRANSFERASE K/L"/>
    <property type="match status" value="1"/>
</dbReference>
<dbReference type="PANTHER" id="PTHR47313:SF1">
    <property type="entry name" value="RIBOSOMAL RNA LARGE SUBUNIT METHYLTRANSFERASE K_L"/>
    <property type="match status" value="1"/>
</dbReference>
<dbReference type="Pfam" id="PF10672">
    <property type="entry name" value="Methyltrans_SAM"/>
    <property type="match status" value="1"/>
</dbReference>
<dbReference type="Pfam" id="PF22020">
    <property type="entry name" value="RlmL_1st"/>
    <property type="match status" value="1"/>
</dbReference>
<dbReference type="Pfam" id="PF02926">
    <property type="entry name" value="THUMP"/>
    <property type="match status" value="1"/>
</dbReference>
<dbReference type="Pfam" id="PF01170">
    <property type="entry name" value="UPF0020"/>
    <property type="match status" value="1"/>
</dbReference>
<dbReference type="PIRSF" id="PIRSF037618">
    <property type="entry name" value="RNA_Mtase_bacteria_prd"/>
    <property type="match status" value="1"/>
</dbReference>
<dbReference type="SMART" id="SM00981">
    <property type="entry name" value="THUMP"/>
    <property type="match status" value="1"/>
</dbReference>
<dbReference type="SUPFAM" id="SSF53335">
    <property type="entry name" value="S-adenosyl-L-methionine-dependent methyltransferases"/>
    <property type="match status" value="2"/>
</dbReference>
<dbReference type="PROSITE" id="PS51165">
    <property type="entry name" value="THUMP"/>
    <property type="match status" value="1"/>
</dbReference>
<dbReference type="PROSITE" id="PS01261">
    <property type="entry name" value="UPF0020"/>
    <property type="match status" value="1"/>
</dbReference>
<comment type="function">
    <text evidence="1">Specifically methylates the guanine in position 2445 (m2G2445) and the guanine in position 2069 (m7G2069) of 23S rRNA.</text>
</comment>
<comment type="catalytic activity">
    <reaction evidence="1">
        <text>guanosine(2445) in 23S rRNA + S-adenosyl-L-methionine = N(2)-methylguanosine(2445) in 23S rRNA + S-adenosyl-L-homocysteine + H(+)</text>
        <dbReference type="Rhea" id="RHEA:42740"/>
        <dbReference type="Rhea" id="RHEA-COMP:10215"/>
        <dbReference type="Rhea" id="RHEA-COMP:10216"/>
        <dbReference type="ChEBI" id="CHEBI:15378"/>
        <dbReference type="ChEBI" id="CHEBI:57856"/>
        <dbReference type="ChEBI" id="CHEBI:59789"/>
        <dbReference type="ChEBI" id="CHEBI:74269"/>
        <dbReference type="ChEBI" id="CHEBI:74481"/>
        <dbReference type="EC" id="2.1.1.173"/>
    </reaction>
</comment>
<comment type="catalytic activity">
    <reaction evidence="1">
        <text>guanosine(2069) in 23S rRNA + S-adenosyl-L-methionine = N(2)-methylguanosine(2069) in 23S rRNA + S-adenosyl-L-homocysteine + H(+)</text>
        <dbReference type="Rhea" id="RHEA:43772"/>
        <dbReference type="Rhea" id="RHEA-COMP:10688"/>
        <dbReference type="Rhea" id="RHEA-COMP:10689"/>
        <dbReference type="ChEBI" id="CHEBI:15378"/>
        <dbReference type="ChEBI" id="CHEBI:57856"/>
        <dbReference type="ChEBI" id="CHEBI:59789"/>
        <dbReference type="ChEBI" id="CHEBI:74269"/>
        <dbReference type="ChEBI" id="CHEBI:74481"/>
        <dbReference type="EC" id="2.1.1.264"/>
    </reaction>
</comment>
<comment type="subcellular location">
    <subcellularLocation>
        <location evidence="1">Cytoplasm</location>
    </subcellularLocation>
</comment>
<comment type="similarity">
    <text evidence="1">Belongs to the methyltransferase superfamily. RlmKL family.</text>
</comment>
<accession>Q5X969</accession>
<feature type="chain" id="PRO_0000366771" description="Ribosomal RNA large subunit methyltransferase K/L">
    <location>
        <begin position="1"/>
        <end position="707"/>
    </location>
</feature>
<feature type="domain" description="THUMP" evidence="1">
    <location>
        <begin position="44"/>
        <end position="155"/>
    </location>
</feature>
<gene>
    <name evidence="1" type="primary">rlmL</name>
    <name type="ordered locus">lpp0022</name>
</gene>
<reference key="1">
    <citation type="journal article" date="2004" name="Nat. Genet.">
        <title>Evidence in the Legionella pneumophila genome for exploitation of host cell functions and high genome plasticity.</title>
        <authorList>
            <person name="Cazalet C."/>
            <person name="Rusniok C."/>
            <person name="Brueggemann H."/>
            <person name="Zidane N."/>
            <person name="Magnier A."/>
            <person name="Ma L."/>
            <person name="Tichit M."/>
            <person name="Jarraud S."/>
            <person name="Bouchier C."/>
            <person name="Vandenesch F."/>
            <person name="Kunst F."/>
            <person name="Etienne J."/>
            <person name="Glaser P."/>
            <person name="Buchrieser C."/>
        </authorList>
    </citation>
    <scope>NUCLEOTIDE SEQUENCE [LARGE SCALE GENOMIC DNA]</scope>
    <source>
        <strain>Paris</strain>
    </source>
</reference>
<keyword id="KW-0963">Cytoplasm</keyword>
<keyword id="KW-0489">Methyltransferase</keyword>
<keyword id="KW-0694">RNA-binding</keyword>
<keyword id="KW-0698">rRNA processing</keyword>
<keyword id="KW-0949">S-adenosyl-L-methionine</keyword>
<keyword id="KW-0808">Transferase</keyword>
<proteinExistence type="inferred from homology"/>
<evidence type="ECO:0000255" key="1">
    <source>
        <dbReference type="HAMAP-Rule" id="MF_01858"/>
    </source>
</evidence>
<organism>
    <name type="scientific">Legionella pneumophila (strain Paris)</name>
    <dbReference type="NCBI Taxonomy" id="297246"/>
    <lineage>
        <taxon>Bacteria</taxon>
        <taxon>Pseudomonadati</taxon>
        <taxon>Pseudomonadota</taxon>
        <taxon>Gammaproteobacteria</taxon>
        <taxon>Legionellales</taxon>
        <taxon>Legionellaceae</taxon>
        <taxon>Legionella</taxon>
    </lineage>
</organism>
<sequence length="707" mass="80183">MNYSLFISCSKGLEYLLEDELKGLGLHVTQVSPQGVYGEASLPVIYNLCLWSRLANRIQLILFSGHAAKEQAVHQLCTDFHWQTVFTHDKTIAIEFHGASEQIRNTMFGAQIVKDGIVDHFRRLNGSRPSVDKEKPQILIHAHLKNDILTVSFDLVGYSLHQRGYRKKAGKAPLKENVAAAMLLRAKWPELAAQGYGLHDPFCGSGTLVIEAAMMAAHIAPGLLRQDQSLQYWARHQSSLWEKLRTQALQQVKPLAVKLVGTDADGKIITLARSNAERAGVLPLVEFNTLPLNACRPGTKRGLVVCNPPYGERLGEVTQLVPLYQQLGTTLHTCYQGWQAAILTSSPVLAKALGLRADKQYTLYNGPLECKLYCLTLSAANKLKNTPDAPLSDNAQMLFNRLEKNRNHLQKWARKNQITCYRIYDADLPEYAYAIDIYNDYAVLQEYAPPASIPVHKAEKRSLEMLQVVPRALGIHPEKLIVKQRKQQKGSEQYQKIGKTSQRLIVTEGKAKLIVNLYDYLDTGLFLDHRLMRLKFAQLEPGTRFLNCFCYTASASVHAALAGALTTNVDLSKTYLLWAEDNFRLNDINLSKHQFLQYDCKEWMKTTRDKFDVIFLDPPSFSNSKRMSDILDIQRDHVSLINMAMRLLNPDGVLYFSTNLRQFKLEPMLKEKYAVQDITPQTIDQDFKRNSKIHHCFKIVMPHFADN</sequence>
<protein>
    <recommendedName>
        <fullName evidence="1">Ribosomal RNA large subunit methyltransferase K/L</fullName>
    </recommendedName>
    <domain>
        <recommendedName>
            <fullName evidence="1">23S rRNA m2G2445 methyltransferase</fullName>
            <ecNumber evidence="1">2.1.1.173</ecNumber>
        </recommendedName>
        <alternativeName>
            <fullName evidence="1">rRNA (guanine-N(2)-)-methyltransferase RlmL</fullName>
        </alternativeName>
    </domain>
    <domain>
        <recommendedName>
            <fullName evidence="1">23S rRNA m7G2069 methyltransferase</fullName>
            <ecNumber evidence="1">2.1.1.264</ecNumber>
        </recommendedName>
        <alternativeName>
            <fullName evidence="1">rRNA (guanine-N(7)-)-methyltransferase RlmK</fullName>
        </alternativeName>
    </domain>
</protein>
<name>RLMKL_LEGPA</name>